<keyword id="KW-0009">Actin-binding</keyword>
<keyword id="KW-0965">Cell junction</keyword>
<keyword id="KW-0963">Cytoplasm</keyword>
<keyword id="KW-0206">Cytoskeleton</keyword>
<keyword id="KW-0597">Phosphoprotein</keyword>
<keyword id="KW-1185">Reference proteome</keyword>
<keyword id="KW-0727">SH2 domain</keyword>
<keyword id="KW-0732">Signal</keyword>
<dbReference type="EMBL" id="BG688560">
    <property type="status" value="NOT_ANNOTATED_CDS"/>
    <property type="molecule type" value="mRNA"/>
</dbReference>
<dbReference type="EMBL" id="BC108089">
    <property type="protein sequence ID" value="AAI08090.1"/>
    <property type="status" value="ALT_INIT"/>
    <property type="molecule type" value="mRNA"/>
</dbReference>
<dbReference type="RefSeq" id="NP_001033244.1">
    <property type="nucleotide sequence ID" value="NM_001038155.1"/>
</dbReference>
<dbReference type="RefSeq" id="XP_005220792.1">
    <property type="nucleotide sequence ID" value="XM_005220735.5"/>
</dbReference>
<dbReference type="SMR" id="Q32PJ7"/>
<dbReference type="FunCoup" id="Q32PJ7">
    <property type="interactions" value="82"/>
</dbReference>
<dbReference type="STRING" id="9913.ENSBTAP00000010461"/>
<dbReference type="PaxDb" id="9913-ENSBTAP00000010461"/>
<dbReference type="PRIDE" id="Q32PJ7"/>
<dbReference type="Ensembl" id="ENSBTAT00000010461.7">
    <property type="protein sequence ID" value="ENSBTAP00000010461.5"/>
    <property type="gene ID" value="ENSBTAG00000007958.7"/>
</dbReference>
<dbReference type="GeneID" id="532898"/>
<dbReference type="KEGG" id="bta:532898"/>
<dbReference type="CTD" id="84951"/>
<dbReference type="VEuPathDB" id="HostDB:ENSBTAG00000007958"/>
<dbReference type="VGNC" id="VGNC:36210">
    <property type="gene designation" value="TNS4"/>
</dbReference>
<dbReference type="eggNOG" id="KOG1930">
    <property type="taxonomic scope" value="Eukaryota"/>
</dbReference>
<dbReference type="GeneTree" id="ENSGT00940000160142"/>
<dbReference type="HOGENOM" id="CLU_398985_0_0_1"/>
<dbReference type="InParanoid" id="Q32PJ7"/>
<dbReference type="OMA" id="SQPSMKF"/>
<dbReference type="OrthoDB" id="6273691at2759"/>
<dbReference type="TreeFam" id="TF315996"/>
<dbReference type="Reactome" id="R-BTA-8875513">
    <property type="pathway name" value="MET interacts with TNS proteins"/>
</dbReference>
<dbReference type="Proteomes" id="UP000009136">
    <property type="component" value="Chromosome 19"/>
</dbReference>
<dbReference type="Bgee" id="ENSBTAG00000007958">
    <property type="expression patterns" value="Expressed in adenohypophysis and 57 other cell types or tissues"/>
</dbReference>
<dbReference type="GO" id="GO:0005856">
    <property type="term" value="C:cytoskeleton"/>
    <property type="evidence" value="ECO:0007669"/>
    <property type="project" value="UniProtKB-SubCell"/>
</dbReference>
<dbReference type="GO" id="GO:0005829">
    <property type="term" value="C:cytosol"/>
    <property type="evidence" value="ECO:0007669"/>
    <property type="project" value="Ensembl"/>
</dbReference>
<dbReference type="GO" id="GO:0005925">
    <property type="term" value="C:focal adhesion"/>
    <property type="evidence" value="ECO:0000318"/>
    <property type="project" value="GO_Central"/>
</dbReference>
<dbReference type="GO" id="GO:0003779">
    <property type="term" value="F:actin binding"/>
    <property type="evidence" value="ECO:0007669"/>
    <property type="project" value="UniProtKB-KW"/>
</dbReference>
<dbReference type="GO" id="GO:0008104">
    <property type="term" value="P:protein localization"/>
    <property type="evidence" value="ECO:0007669"/>
    <property type="project" value="Ensembl"/>
</dbReference>
<dbReference type="CDD" id="cd01213">
    <property type="entry name" value="PTB_tensin"/>
    <property type="match status" value="1"/>
</dbReference>
<dbReference type="FunFam" id="3.30.505.10:FF:000002">
    <property type="entry name" value="Tensin 1"/>
    <property type="match status" value="1"/>
</dbReference>
<dbReference type="Gene3D" id="2.30.29.30">
    <property type="entry name" value="Pleckstrin-homology domain (PH domain)/Phosphotyrosine-binding domain (PTB)"/>
    <property type="match status" value="1"/>
</dbReference>
<dbReference type="Gene3D" id="3.30.505.10">
    <property type="entry name" value="SH2 domain"/>
    <property type="match status" value="1"/>
</dbReference>
<dbReference type="InterPro" id="IPR011993">
    <property type="entry name" value="PH-like_dom_sf"/>
</dbReference>
<dbReference type="InterPro" id="IPR013625">
    <property type="entry name" value="PTB"/>
</dbReference>
<dbReference type="InterPro" id="IPR006020">
    <property type="entry name" value="PTB/PI_dom"/>
</dbReference>
<dbReference type="InterPro" id="IPR000980">
    <property type="entry name" value="SH2"/>
</dbReference>
<dbReference type="InterPro" id="IPR036860">
    <property type="entry name" value="SH2_dom_sf"/>
</dbReference>
<dbReference type="InterPro" id="IPR033929">
    <property type="entry name" value="Tensin_PTB"/>
</dbReference>
<dbReference type="InterPro" id="IPR051484">
    <property type="entry name" value="Tensin_PTEN_phosphatase"/>
</dbReference>
<dbReference type="PANTHER" id="PTHR45734">
    <property type="entry name" value="TENSIN"/>
    <property type="match status" value="1"/>
</dbReference>
<dbReference type="PANTHER" id="PTHR45734:SF6">
    <property type="entry name" value="TENSIN-4"/>
    <property type="match status" value="1"/>
</dbReference>
<dbReference type="Pfam" id="PF08416">
    <property type="entry name" value="PTB"/>
    <property type="match status" value="1"/>
</dbReference>
<dbReference type="Pfam" id="PF00017">
    <property type="entry name" value="SH2"/>
    <property type="match status" value="1"/>
</dbReference>
<dbReference type="SMART" id="SM00462">
    <property type="entry name" value="PTB"/>
    <property type="match status" value="1"/>
</dbReference>
<dbReference type="SMART" id="SM00252">
    <property type="entry name" value="SH2"/>
    <property type="match status" value="1"/>
</dbReference>
<dbReference type="SUPFAM" id="SSF50729">
    <property type="entry name" value="PH domain-like"/>
    <property type="match status" value="1"/>
</dbReference>
<dbReference type="SUPFAM" id="SSF55550">
    <property type="entry name" value="SH2 domain"/>
    <property type="match status" value="1"/>
</dbReference>
<dbReference type="PROSITE" id="PS50001">
    <property type="entry name" value="SH2"/>
    <property type="match status" value="1"/>
</dbReference>
<name>TENS4_BOVIN</name>
<evidence type="ECO:0000250" key="1">
    <source>
        <dbReference type="UniProtKB" id="Q8IZW8"/>
    </source>
</evidence>
<evidence type="ECO:0000255" key="2"/>
<evidence type="ECO:0000255" key="3">
    <source>
        <dbReference type="PROSITE-ProRule" id="PRU00191"/>
    </source>
</evidence>
<evidence type="ECO:0000256" key="4">
    <source>
        <dbReference type="SAM" id="MobiDB-lite"/>
    </source>
</evidence>
<evidence type="ECO:0000305" key="5"/>
<evidence type="ECO:0000312" key="6">
    <source>
        <dbReference type="Proteomes" id="UP000009136"/>
    </source>
</evidence>
<sequence>MSQVMSSPLLAGGPAVGLAPCEEPRRVLHPAPSPSLPPPCPYYTTEGWGAQALMAPMPCKGPPGRLQPAPQAGANASCLLKAPGEQVSGAQEDLDSYIDFSLESLNQMILELDPTFQLLPPGPGGPEAQPTQSTTLGKKKEEPEALDIKYIEVTSTRSRCHDGPRSCCSPSVTPPFGSPRTGGLLLSRDLPRETRSSSESLIFSGSQGRGHQHPAPPSAVPSSHPPTSPSISIPGMGSKASGPHGLGSPLVASPSLEKGLGGQGPQLSSRVSMLSGSPASDISYVFGSSQSLLHSSISSHQSSSRSLESPSSSSSSLNNLGPVSLYTRASDLQVPSNATPSMGQPRATRSPPLAKEHASSCPPSITNSMTDIPIVLINGFPEPGSPPSQRTPGPQDFVRPGATSSSMPCPATRSHSQTLPEAPPTASPEGPARDMQPTMKFVMDTSKYWFKPSISREQAIELLRKEEPGAFIVRDSSSYRGSFGLALKVQEAPTPAQSRPGEDSSDLIRHFLIESSAKGVHLKGADEEPYFGSLSAFVCQHSIMALALPCKLVIPQKELGGGDGASDPSADGQASCLKKSAGCHALYLSSVSVETLSGALAVEKAISATLERDVLPTPTVVHFKVTEQGITLTDVQRKVFFRRHYPLATLRFCGMDPEQRKWQKYCKPSRIFGFVAKSQTESQENVCHLFAEYDTLQPASQVIRLVGALLQDPERM</sequence>
<feature type="signal peptide" evidence="2">
    <location>
        <begin position="1"/>
        <end position="17"/>
    </location>
</feature>
<feature type="chain" id="PRO_0000248212" description="Tensin-4">
    <location>
        <begin position="18"/>
        <end position="716"/>
    </location>
</feature>
<feature type="domain" description="SH2" evidence="3">
    <location>
        <begin position="449"/>
        <end position="556"/>
    </location>
</feature>
<feature type="domain" description="PTB" evidence="2">
    <location>
        <begin position="583"/>
        <end position="704"/>
    </location>
</feature>
<feature type="region of interest" description="Disordered" evidence="4">
    <location>
        <begin position="119"/>
        <end position="274"/>
    </location>
</feature>
<feature type="region of interest" description="Disordered" evidence="4">
    <location>
        <begin position="301"/>
        <end position="322"/>
    </location>
</feature>
<feature type="region of interest" description="Disordered" evidence="4">
    <location>
        <begin position="334"/>
        <end position="366"/>
    </location>
</feature>
<feature type="region of interest" description="Disordered" evidence="4">
    <location>
        <begin position="379"/>
        <end position="436"/>
    </location>
</feature>
<feature type="compositionally biased region" description="Basic and acidic residues" evidence="4">
    <location>
        <begin position="138"/>
        <end position="150"/>
    </location>
</feature>
<feature type="compositionally biased region" description="Polar residues" evidence="4">
    <location>
        <begin position="197"/>
        <end position="206"/>
    </location>
</feature>
<feature type="compositionally biased region" description="Pro residues" evidence="4">
    <location>
        <begin position="214"/>
        <end position="228"/>
    </location>
</feature>
<feature type="compositionally biased region" description="Polar residues" evidence="4">
    <location>
        <begin position="265"/>
        <end position="274"/>
    </location>
</feature>
<feature type="compositionally biased region" description="Polar residues" evidence="4">
    <location>
        <begin position="402"/>
        <end position="419"/>
    </location>
</feature>
<feature type="modified residue" description="Phosphoserine" evidence="1">
    <location>
        <position position="248"/>
    </location>
</feature>
<feature type="sequence conflict" description="In Ref. 3; AAI08090." evidence="5" ref="3">
    <original>G</original>
    <variation>V</variation>
    <location>
        <position position="64"/>
    </location>
</feature>
<feature type="sequence conflict" description="In Ref. 2; BG688560." evidence="5" ref="2">
    <original>L</original>
    <variation>W</variation>
    <location>
        <position position="112"/>
    </location>
</feature>
<comment type="function">
    <text evidence="1">Promotes EGF-induced cell migration by displacing tensin TNS3 from the cytoplasmic tail of integrin ITGB1 which results in dissociation of TNS3 from focal adhesions, disassembly of actin stress fibers and initiation of cell migration. Suppresses ligand-induced degradation of EGFR by reducing EGFR ubiquitination in the presence of EGF. Increases MET protein stability by inhibiting MET endocytosis and subsequent lysosomal degradation which leads to increased cell survival, proliferation and migration.</text>
</comment>
<comment type="subunit">
    <text evidence="1">Interacts (via SH2 domain) with Rho GTPase-activating protein DLC1 (via C-terminus); the interaction is independent of DLC1 tyrosine phosphorylation. Interacts with integrin ITGB1; the interaction displaces tensin TNS3 from the ITGB1 cytoplasmic tail and promotes ITGB1 stability. Interacts (via SH2 domain) with E3 ubiquitin-protein ligase CBL (phosphorylated on 'Tyr-782'); the interaction is enhanced in the presence of EGF and reduces interaction of CBL with EGFR. Interacts (via SH2 domain) with receptor tyrosine kinase MET (when phosphorylated); the interaction increases MET protein stability.</text>
</comment>
<comment type="subcellular location">
    <subcellularLocation>
        <location evidence="1">Cell junction</location>
        <location evidence="1">Focal adhesion</location>
    </subcellularLocation>
    <subcellularLocation>
        <location evidence="1">Cytoplasm</location>
        <location evidence="1">Cytoskeleton</location>
    </subcellularLocation>
</comment>
<comment type="similarity">
    <text evidence="5">Belongs to the PTEN phosphatase protein family.</text>
</comment>
<comment type="sequence caution" evidence="5">
    <conflict type="erroneous initiation">
        <sequence resource="EMBL-CDS" id="AAI08090"/>
    </conflict>
    <text>Truncated N-terminus.</text>
</comment>
<reference evidence="6" key="1">
    <citation type="submission" date="2018-03" db="EMBL/GenBank/DDBJ databases">
        <title>ARS-UCD1.2.</title>
        <authorList>
            <person name="Rosen B.D."/>
            <person name="Bickhart D.M."/>
            <person name="Koren S."/>
            <person name="Schnabel R.D."/>
            <person name="Hall R."/>
            <person name="Zimin A."/>
            <person name="Dreischer C."/>
            <person name="Schultheiss S."/>
            <person name="Schroeder S.G."/>
            <person name="Elsik C.G."/>
            <person name="Couldrey C."/>
            <person name="Liu G.E."/>
            <person name="Van Tassell C.P."/>
            <person name="Phillippy A.M."/>
            <person name="Smith T.P.L."/>
            <person name="Medrano J.F."/>
        </authorList>
    </citation>
    <scope>NUCLEOTIDE SEQUENCE [LARGE SCALE GENOMIC DNA]</scope>
    <source>
        <strain evidence="6">Hereford</strain>
    </source>
</reference>
<reference key="2">
    <citation type="journal article" date="2002" name="Mamm. Genome">
        <title>Analysis of bovine mammary gland EST and functional annotation of the Bos taurus gene index.</title>
        <authorList>
            <person name="Sonstegard T.S."/>
            <person name="Capuco A.V."/>
            <person name="White J."/>
            <person name="Van Tassell C.P."/>
            <person name="Connor E.E."/>
            <person name="Cho J."/>
            <person name="Sultana R."/>
            <person name="Shade L."/>
            <person name="Wray J.E."/>
            <person name="Wells K.D."/>
            <person name="Quackenbush J."/>
        </authorList>
    </citation>
    <scope>NUCLEOTIDE SEQUENCE [MRNA] OF 1-126</scope>
</reference>
<reference key="3">
    <citation type="submission" date="2005-10" db="EMBL/GenBank/DDBJ databases">
        <authorList>
            <consortium name="NIH - Mammalian Gene Collection (MGC) project"/>
        </authorList>
    </citation>
    <scope>NUCLEOTIDE SEQUENCE [LARGE SCALE MRNA] OF 43-716</scope>
    <source>
        <strain>Crossbred X Angus</strain>
        <tissue>Ileum</tissue>
    </source>
</reference>
<gene>
    <name type="primary">TNS4</name>
</gene>
<proteinExistence type="evidence at transcript level"/>
<protein>
    <recommendedName>
        <fullName>Tensin-4</fullName>
    </recommendedName>
</protein>
<organism>
    <name type="scientific">Bos taurus</name>
    <name type="common">Bovine</name>
    <dbReference type="NCBI Taxonomy" id="9913"/>
    <lineage>
        <taxon>Eukaryota</taxon>
        <taxon>Metazoa</taxon>
        <taxon>Chordata</taxon>
        <taxon>Craniata</taxon>
        <taxon>Vertebrata</taxon>
        <taxon>Euteleostomi</taxon>
        <taxon>Mammalia</taxon>
        <taxon>Eutheria</taxon>
        <taxon>Laurasiatheria</taxon>
        <taxon>Artiodactyla</taxon>
        <taxon>Ruminantia</taxon>
        <taxon>Pecora</taxon>
        <taxon>Bovidae</taxon>
        <taxon>Bovinae</taxon>
        <taxon>Bos</taxon>
    </lineage>
</organism>
<accession>Q32PJ7</accession>
<accession>F1MN94</accession>